<organismHost>
    <name type="scientific">Macaca mulatta</name>
    <name type="common">Rhesus macaque</name>
    <dbReference type="NCBI Taxonomy" id="9544"/>
</organismHost>
<comment type="function">
    <molecule>Matrix protein p10</molecule>
    <text evidence="23">Matrix protein.</text>
</comment>
<comment type="function">
    <text evidence="23">Nucleocapsid protein p14: Nucleocapsid protein.</text>
</comment>
<comment type="function">
    <molecule>Capsid protein p27</molecule>
    <text evidence="23">Capsid protein.</text>
</comment>
<comment type="function">
    <molecule>Protease 17 kDa</molecule>
    <text evidence="10 20">The aspartyl protease mediates proteolytic cleavages of Gag and Gag-Pol polyproteins during or shortly after the release of the virion from the plasma membrane. Cleavages take place as an ordered, step-wise cascade to yield mature proteins. This process is called maturation. Displays maximal activity during the budding process just prior to particle release from the cell.</text>
</comment>
<comment type="function">
    <molecule>Protease 13 kDa</molecule>
    <text evidence="10 20">The aspartyl protease mediates proteolytic cleavages of Gag and Gag-Pol polyproteins during or shortly after the release of the virion from the plasma membrane. Cleavages take place as an ordered, step-wise cascade to yield mature proteins. This process is called maturation. Displays maximal activity during the budding process just prior to particle release from the cell.</text>
</comment>
<comment type="function">
    <molecule>G-patch peptide</molecule>
    <text evidence="19">Enhances the activity of the reverse transcriptase. May be part of the mature RT.</text>
</comment>
<comment type="function">
    <molecule>Reverse transcriptase/ribonuclease H</molecule>
    <text evidence="11">RT is a multifunctional enzyme that converts the viral dimeric RNA genome into dsDNA in the cytoplasm, shortly after virus entry into the cell. This enzyme displays a DNA polymerase activity that can copy either DNA or RNA templates, and a ribonuclease H (RNase H) activity that cleaves the RNA strand of RNA-DNA heteroduplexes in a partially processive 3' to 5' endonucleasic mode. Conversion of viral genomic RNA into dsDNA requires many steps. A tRNA binds to the primer-binding site (PBS) situated at the 5' end of the viral RNA. RT uses the 3' end of the tRNA primer to perfom a short round of RNA-dependent minus-strand DNA synthesis. The reading proceeds through the U5 region and ends after the repeated (R) region which is present at both ends of viral RNA. The portion of the RNA-DNA heteroduplex is digested by the RNase H, resulting in a ssDNA product attached to the tRNA primer. This ssDNA/tRNA hybridizes with the identical R region situated at the 3' end of viral RNA. This template exchange, known as minus-strand DNA strong stop transfer, can be either intra- or intermolecular. RT uses the 3' end of this newly synthesized short ssDNA to perfom the RNA-dependent minus-strand DNA synthesis of the whole template. RNase H digests the RNA template except for a polypurine tract (PPT) situated at the 5' end of the genome. It is not clear if both polymerase and RNase H activities are simultaneous. RNase H probably can proceed both in a polymerase-dependent (RNA cut into small fragments by the same RT performing DNA synthesis) and a polymerase-independent mode (cleavage of remaining RNA fragments by free RTs). Secondly, RT performs DNA-directed plus-strand DNA synthesis using the PPT that has not been removed by RNase H as primers. PPT and tRNA primers are then removed by RNase H. The 3' and 5' ssDNA PBS regions hybridize to form a circular dsDNA intermediate. Strand displacement synthesis by RT to the PBS and PPT ends produces a blunt ended, linear dsDNA copy of the viral genome that includes long terminal repeats (LTRs) at both ends.</text>
</comment>
<comment type="function">
    <molecule>Integrase</molecule>
    <text evidence="26">Catalyzes viral DNA integration into the host chromosome, by performing a series of DNA cutting and joining reactions.</text>
</comment>
<comment type="catalytic activity">
    <reaction evidence="11 19">
        <text>DNA(n) + a 2'-deoxyribonucleoside 5'-triphosphate = DNA(n+1) + diphosphate</text>
        <dbReference type="Rhea" id="RHEA:22508"/>
        <dbReference type="Rhea" id="RHEA-COMP:17339"/>
        <dbReference type="Rhea" id="RHEA-COMP:17340"/>
        <dbReference type="ChEBI" id="CHEBI:33019"/>
        <dbReference type="ChEBI" id="CHEBI:61560"/>
        <dbReference type="ChEBI" id="CHEBI:173112"/>
        <dbReference type="EC" id="2.7.7.49"/>
    </reaction>
</comment>
<comment type="catalytic activity">
    <reaction evidence="11 19">
        <text>DNA(n) + a 2'-deoxyribonucleoside 5'-triphosphate = DNA(n+1) + diphosphate</text>
        <dbReference type="Rhea" id="RHEA:22508"/>
        <dbReference type="Rhea" id="RHEA-COMP:17339"/>
        <dbReference type="Rhea" id="RHEA-COMP:17340"/>
        <dbReference type="ChEBI" id="CHEBI:33019"/>
        <dbReference type="ChEBI" id="CHEBI:61560"/>
        <dbReference type="ChEBI" id="CHEBI:173112"/>
        <dbReference type="EC" id="2.7.7.7"/>
    </reaction>
</comment>
<comment type="catalytic activity">
    <reaction evidence="12">
        <text>Endonucleolytic cleavage to 5'-phosphomonoester.</text>
        <dbReference type="EC" id="3.1.26.4"/>
    </reaction>
</comment>
<comment type="catalytic activity">
    <reaction evidence="4">
        <text>dUTP + H2O = dUMP + diphosphate + H(+)</text>
        <dbReference type="Rhea" id="RHEA:10248"/>
        <dbReference type="ChEBI" id="CHEBI:15377"/>
        <dbReference type="ChEBI" id="CHEBI:15378"/>
        <dbReference type="ChEBI" id="CHEBI:33019"/>
        <dbReference type="ChEBI" id="CHEBI:61555"/>
        <dbReference type="ChEBI" id="CHEBI:246422"/>
        <dbReference type="EC" id="3.6.1.23"/>
    </reaction>
</comment>
<comment type="cofactor">
    <cofactor evidence="11">
        <name>Mg(2+)</name>
        <dbReference type="ChEBI" id="CHEBI:18420"/>
    </cofactor>
    <text evidence="11">The RT polymerase active site binds 2 magnesium ions.</text>
</comment>
<comment type="subunit">
    <molecule>Protease 17 kDa</molecule>
    <text evidence="4">Homodimer (By similarity).</text>
</comment>
<comment type="subunit">
    <molecule>Reverse transcriptase/ribonuclease H</molecule>
    <text evidence="19">Interacts with the G-patch peptide (PubMed:22171253).</text>
</comment>
<comment type="subunit">
    <molecule>G-patch peptide</molecule>
    <text evidence="19">Interacts with the reverse transcriptase/ribonuclease H (PubMed:22171253).</text>
</comment>
<comment type="subunit">
    <molecule>Nucleocapsid protein-dUTPase</molecule>
    <text evidence="4">Homotrimer (By similarity).</text>
</comment>
<comment type="subcellular location">
    <molecule>Matrix protein p10</molecule>
    <subcellularLocation>
        <location evidence="23">Virion</location>
    </subcellularLocation>
</comment>
<comment type="subcellular location">
    <molecule>Capsid protein p27</molecule>
    <subcellularLocation>
        <location evidence="23">Virion</location>
    </subcellularLocation>
</comment>
<comment type="subcellular location">
    <molecule>Nucleocapsid protein-dUTPase</molecule>
    <subcellularLocation>
        <location evidence="23">Virion</location>
    </subcellularLocation>
</comment>
<comment type="subcellular location">
    <molecule>Protease 13 kDa</molecule>
    <subcellularLocation>
        <location evidence="20">Virion</location>
    </subcellularLocation>
</comment>
<comment type="subcellular location">
    <molecule>Protease 17 kDa</molecule>
    <subcellularLocation>
        <location evidence="20">Virion</location>
    </subcellularLocation>
</comment>
<comment type="alternative products">
    <event type="ribosomal frameshifting"/>
    <isoform>
        <id>P07572-1</id>
        <name>Gag-Pro-Pol polyprotein</name>
        <sequence type="displayed"/>
    </isoform>
    <isoform>
        <id>P07567-1</id>
        <name>Gag polyprotein</name>
        <sequence type="external"/>
    </isoform>
    <isoform>
        <id>P07570-1</id>
        <name>Gag-Pro polyprotein</name>
        <sequence type="external"/>
    </isoform>
</comment>
<comment type="domain">
    <molecule>Gag-Pro-Pol polyprotein</molecule>
    <text evidence="17">Late-budding domains (L domains) are short sequence motifs essential for viral particle release. They can occur individually or in close proximity within structural proteins. They interacts with sorting cellular proteins of the multivesicular body (MVB) pathway. Most of these proteins are class E vacuolar protein sorting factors belonging to ESCRT-I, ESCRT-II or ESCRT-III complexes. Phosphorylated protein pp24 and phosphorylated protein pp18 contains two L domains: a PTAP/PSAP motif which interacts with the UEV domain of TSG101, and a PPXY motif which binds to the WW domains of the ubiquitin ligase NEDD4. Both motifs contribute to viral release. The PSAP motif acts as an additional L domain and promotes the efficient release of the virions but requires an intact PPPY motif to perform its function.</text>
</comment>
<comment type="domain">
    <molecule>Protease 17 kDa</molecule>
    <text evidence="18 19">The glycine-rich G-patch domain (GPD) is present at the C-terminus of the protease from which it is then detached by the protease itself.</text>
</comment>
<comment type="PTM">
    <molecule>Protease 17 kDa</molecule>
    <text evidence="18 20">Released by autocatalytic processing. The protease can undergo further autoprocessing to yield 2 shorter but enzymatically active forms of 12 kDa and 13 kDa.</text>
</comment>
<comment type="PTM">
    <molecule>Gag-Pro-Pol polyprotein</molecule>
    <text evidence="5">Myristoylated. Myristoylation of the matrix (MA) domain mediates the transport and binding of Gag polyproteins to the host plasma membrane and is required for the assembly of viral particles.</text>
</comment>
<comment type="PTM">
    <molecule>Gag-Pro-Pol polyprotein</molecule>
    <text evidence="20">Specific enzymatic cleavages in vivo yield mature proteins.</text>
</comment>
<comment type="miscellaneous">
    <text evidence="11">The reverse transcriptase is an error-prone enzyme that lacks a proof-reading function. High mutations rate is a direct consequence of this characteristic. RT also displays frequent template switching leading to high recombination rate. Recombination mostly occurs between homologous regions of the two copackaged RNA genomes. If these two RNA molecules derive from different viral strains, reverse transcription will give rise to highly recombinated proviral DNAs.</text>
</comment>
<comment type="miscellaneous">
    <molecule>Isoform Gag-Pro-Pol polyprotein</molecule>
    <text evidence="24 25">Produced by -1 ribosomal frameshiftings between gag-pro and pro-pol.</text>
</comment>
<comment type="similarity">
    <text evidence="23">Belongs to the retroviral Pol polyprotein family.</text>
</comment>
<comment type="sequence caution" evidence="23">
    <conflict type="erroneous gene model prediction">
        <sequence resource="EMBL-CDS" id="AAA47711"/>
    </conflict>
</comment>
<evidence type="ECO:0000250" key="1">
    <source>
        <dbReference type="UniProtKB" id="P03354"/>
    </source>
</evidence>
<evidence type="ECO:0000250" key="2">
    <source>
        <dbReference type="UniProtKB" id="P03365"/>
    </source>
</evidence>
<evidence type="ECO:0000250" key="3">
    <source>
        <dbReference type="UniProtKB" id="P07567"/>
    </source>
</evidence>
<evidence type="ECO:0000250" key="4">
    <source>
        <dbReference type="UniProtKB" id="P07570"/>
    </source>
</evidence>
<evidence type="ECO:0000250" key="5">
    <source>
        <dbReference type="UniProtKB" id="P10258"/>
    </source>
</evidence>
<evidence type="ECO:0000250" key="6">
    <source>
        <dbReference type="UniProtKB" id="P11283"/>
    </source>
</evidence>
<evidence type="ECO:0000255" key="7"/>
<evidence type="ECO:0000255" key="8">
    <source>
        <dbReference type="PROSITE-ProRule" id="PRU00047"/>
    </source>
</evidence>
<evidence type="ECO:0000255" key="9">
    <source>
        <dbReference type="PROSITE-ProRule" id="PRU00092"/>
    </source>
</evidence>
<evidence type="ECO:0000255" key="10">
    <source>
        <dbReference type="PROSITE-ProRule" id="PRU00275"/>
    </source>
</evidence>
<evidence type="ECO:0000255" key="11">
    <source>
        <dbReference type="PROSITE-ProRule" id="PRU00405"/>
    </source>
</evidence>
<evidence type="ECO:0000255" key="12">
    <source>
        <dbReference type="PROSITE-ProRule" id="PRU00408"/>
    </source>
</evidence>
<evidence type="ECO:0000255" key="13">
    <source>
        <dbReference type="PROSITE-ProRule" id="PRU00450"/>
    </source>
</evidence>
<evidence type="ECO:0000255" key="14">
    <source>
        <dbReference type="PROSITE-ProRule" id="PRU00457"/>
    </source>
</evidence>
<evidence type="ECO:0000255" key="15">
    <source>
        <dbReference type="PROSITE-ProRule" id="PRU00506"/>
    </source>
</evidence>
<evidence type="ECO:0000256" key="16">
    <source>
        <dbReference type="SAM" id="MobiDB-lite"/>
    </source>
</evidence>
<evidence type="ECO:0000269" key="17">
    <source>
    </source>
</evidence>
<evidence type="ECO:0000269" key="18">
    <source>
    </source>
</evidence>
<evidence type="ECO:0000269" key="19">
    <source>
    </source>
</evidence>
<evidence type="ECO:0000269" key="20">
    <source>
    </source>
</evidence>
<evidence type="ECO:0000303" key="21">
    <source>
    </source>
</evidence>
<evidence type="ECO:0000303" key="22">
    <source>
    </source>
</evidence>
<evidence type="ECO:0000305" key="23"/>
<evidence type="ECO:0000305" key="24">
    <source>
    </source>
</evidence>
<evidence type="ECO:0000305" key="25">
    <source>
    </source>
</evidence>
<evidence type="ECO:0000305" key="26">
    <source>
    </source>
</evidence>
<evidence type="ECO:0007829" key="27">
    <source>
        <dbReference type="PDB" id="6S1U"/>
    </source>
</evidence>
<evidence type="ECO:0007829" key="28">
    <source>
        <dbReference type="PDB" id="6S1V"/>
    </source>
</evidence>
<evidence type="ECO:0007829" key="29">
    <source>
        <dbReference type="PDB" id="6S1W"/>
    </source>
</evidence>
<evidence type="ECO:0007829" key="30">
    <source>
        <dbReference type="PDB" id="7BGT"/>
    </source>
</evidence>
<sequence length="1771" mass="198014">MGQELSQHERYVEQLKQALKTRGVKVKYADLLKFFDFVKDTCPWFPQEGTIDIKRWRRVGDCFQDYYNTFGPEKVPVTAFSYWNLIKELIDKKEVNPQVMAAVAQTEEILKSNSQTDLTKTSQNPDLDLISLDSDDEGAKSSSLQDKGLSSTKKPKRFPVLLTAQTSKDPEDPNPSEVDWDGLEDEAAKYHNPDWPPFLTRPPPYNKATPSAPTVMAVVNPKEELKEKIAQLEEQIKLEELHQALISKLQKLKTGNETVTHPDTAGGLSRTPHWPGQHIPKGKCCASREKEEQIPKDIFPVTETVDGQGQAWRHHNGFDFAVIKELKTAASQYGATAPYTLAIVESVADNWLTPTDWNTLVRAVLSGGDHLLWKSEFFENCRDTAKRNQQAGNGWDFDMLTGSGNYSSTDAQMQYDPGLFAQIQAAATKAWRKLPVKGDPGASLTGVKQGPDEPFADFVHRLITTAGRIFGSAEAGVDYVKQLAYENANPACQAAIRPYRKKTDLTGYIRLCSDIGPSYQQGLAMAAAFSGQTVKDFLNNKNKEKGGCCFKCGKKGHFAKNCHEHAHNNAEPKVPGLCPRCKRGKHWANECKSKTDNQGNPIPPHQGNRVEGPAPGPETSLWGSQLCSSQQKQPISKLTRATPGSAGLDLCSTSHTVLTPEMGPQALSTGIYGPLPPNTFGLILGRSSITMKGLQVYPGVIDNDYTGEIKIMAKAVNNIVTVSQGNRIAQLILLPLIETDNKVQQPYRGQGSFGSSDIYWVQPITCQKPSLTLWLDDKMFTGLIDTGADVTIIKLEDWPPNWPITDTLTNLRGIGQSNNPKQSSKYLTWRDKENNSGLIKPFVIPNLPVNLWGRDLLSQMKIMMCSPNDIVTAQMLAQGYSPGKGLGKKENGILHPIPNQGQSNKKGFGNFLTAAIDILAPQQCAEPITWKSDEPVWVDQWPLTNDKLAAAQQLVQEQLEAGHITESSSPWNTPIFVIKKKSGKWRLLQDLRAVNATMVLMGALQPGLPSPVAIPQGYLKIIIDLKDCFFSIPLHPSDQKRFAFSLPSTNFKEPMQRFQWKVLPQGMANSPTLCQKYVATAIHKVRHAWKQMYIIHYMDDILIAGKDGQQVLQCFDQLKQELTAAGLHIAPEKVQLQDPYTYLGFELNGPKITNQKAVIRKDKLQTLNDFQKLLGDINWLRPYLKLTTGDLKPLFDTLKGDSDPNSHRSLSKEALASLEKVETAIAEQFVTHINYSLPLIFLIFNTALTPTGLFWQDNPIMWIHLPASPKKVLLPYYDAIADLIILGRDHSKKYFGIEPSTIIQPYSKSQIDWLMQNTEMWPIACASFVGILDNHYPPNKLIQFCKLHTFVFPQIISKTPLNNALLVFTDGSSTGMAAYTLTDTTIKFQTNLNSAQLVELQALIAVLSAFPNQPLNIYTDSAYLAHSIPLLETVAQIKHISETAKLFLQCQQLIYNRSIPFYIGHVRAHSGLPGPIAQGNQRADLATKIVASNINTNLESAQNAHTLHHLNAQTLRLMFNIPREQARQIVKQCPICVTYLPVPHLGVNPRGLFPNMIWQMDVTHYSEFGNLKYIHVSIDTFSGFLLATLQTGETTKHVITHLLHCFSIIGLPKQIKTDNGPGYTSKNFQEFCSTLQIKHITGIPYNPQGQGIVERAHLSLKTTIEKIKKGEWYPRKGTPRNILNHALFILNFLNLDDQNKSAADRFWHNNPKKQFAMVKWKDPLDNTWHGPDPVLIWGRGSVCVYSQTYDAARWLPERLVRQVSNNNQSRE</sequence>
<gene>
    <name type="primary">gag-pro-pol</name>
</gene>
<accession>P07572</accession>
<accession>O56224</accession>
<reference key="1">
    <citation type="journal article" date="1986" name="Cell">
        <title>Nucleotide sequence of Mason-Pfizer monkey virus: an immunosuppressive D-type retrovirus.</title>
        <authorList>
            <person name="Sonigo P."/>
            <person name="Barker C."/>
            <person name="Hunter E."/>
            <person name="Wain-Hobson S."/>
        </authorList>
    </citation>
    <scope>NUCLEOTIDE SEQUENCE [GENOMIC RNA]</scope>
    <scope>RIBOSOMAL FRAMESHIFT</scope>
    <source>
        <strain>Clone 6A</strain>
    </source>
</reference>
<reference key="2">
    <citation type="submission" date="1997-11" db="EMBL/GenBank/DDBJ databases">
        <authorList>
            <person name="Chappey C."/>
        </authorList>
    </citation>
    <scope>NUCLEOTIDE SEQUENCE [LARGE SCALE GENOMIC DNA]</scope>
</reference>
<reference key="3">
    <citation type="journal article" date="1998" name="Virology">
        <title>Three active forms of aspartic proteinase from Mason-Pfizer monkey virus.</title>
        <authorList>
            <person name="Zabransky A."/>
            <person name="Andreansky M."/>
            <person name="Hruskova-Heidingsfeldova O."/>
            <person name="Havlicek V."/>
            <person name="Hunter E."/>
            <person name="Ruml T."/>
            <person name="Pichova I."/>
        </authorList>
    </citation>
    <scope>PROTEOLYTIC CLEAVAGE (PROTEASE 17 KDA)</scope>
    <scope>CATALYTIC ACTIVITY (PROTEASE 17 KDA)</scope>
    <scope>FUNCTION (PROTEASE 17 KDA)</scope>
    <scope>PROTEOLYTIC CLEAVAGE (GAG-PRO POLYPROTEIN)</scope>
    <scope>SUBCELLULAR LOCATION (PROTEASE 17 KDA)</scope>
    <scope>SUBCELLULAR LOCATION (PROTEASE 13 KDA)</scope>
    <scope>CATALYTIC ACTIVITY (PROTEASE 13 KDA)</scope>
    <scope>FUNCTION (PROTEASE 13 KDA)</scope>
</reference>
<reference key="4">
    <citation type="journal article" date="2003" name="J. Virol.">
        <title>The Mason-Pfizer monkey virus PPPY and PSAP motifs both contribute to virus release.</title>
        <authorList>
            <person name="Gottwein E."/>
            <person name="Bodem J."/>
            <person name="Mueller B."/>
            <person name="Schmechel A."/>
            <person name="Zentgraf H."/>
            <person name="Kraeusslich H.G."/>
        </authorList>
    </citation>
    <scope>DOMAIN (GAG-PRO-POL POLYPROTEIN)</scope>
    <scope>MUTAGENESIS OF 203-PRO--TYR-205 AND 210-PRO--PRO-211</scope>
</reference>
<reference key="5">
    <citation type="journal article" date="2005" name="J. Biol. Chem.">
        <title>The RNA binding G-patch domain in retroviral protease is important for infectivity and D-type morphogenesis of Mason-Pfizer monkey virus.</title>
        <authorList>
            <person name="Bauerova-Zabranska H."/>
            <person name="Stokrova J."/>
            <person name="Strisovsky K."/>
            <person name="Hunter E."/>
            <person name="Ruml T."/>
            <person name="Pichova I."/>
        </authorList>
    </citation>
    <scope>PROTEOLYTIC CLEAVAGE (PROTEASE 17 KDA)</scope>
    <scope>DOMAIN (PROTEASE 17 KDA)</scope>
    <scope>MUTAGENESIS OF ASN-868; ALA-873; GLN-874 AND TYR-880</scope>
</reference>
<reference key="6">
    <citation type="journal article" date="2012" name="J. Virol.">
        <title>The G-patch domain of Mason-Pfizer monkey virus is a part of reverse transcriptase.</title>
        <authorList>
            <person name="Krizova I."/>
            <person name="Hadravova R."/>
            <person name="Stokrova J."/>
            <person name="Guenterova J."/>
            <person name="Dolezal M."/>
            <person name="Ruml T."/>
            <person name="Rumlova M."/>
            <person name="Pichova I."/>
        </authorList>
    </citation>
    <scope>DOMAIN (PROTEASE 17 KDA)</scope>
    <scope>CATALYTIC ACTIVITY (REVERSE TRANSCRIPTASE/RIBONUCLEASE H)</scope>
    <scope>MUTAGENESIS OF GLY-879; TYR-880; GLY-883; GLY-885; LEU-886; GLY-887; GLY-892 AND GLY-907</scope>
    <scope>FUNCTION (G-PATCH PEPTIDE)</scope>
    <scope>INTERACTION WITH THE REVERSE TRANSCRIPTASE/RIBONUCLEASE H (G-PATCH PEPTIDE)</scope>
    <scope>INTERACTION WITH THE G-PATCH PEPTIDE (REVERSE TRANSCRIPTASE/RIBONUCLEASE H)</scope>
</reference>
<reference key="7">
    <citation type="journal article" date="2013" name="Biomed. Res. Int.">
        <title>A genome-wide analysis of RNA pseudoknots that stimulate efficient -1 ribosomal frameshifting or readthrough in animal viruses.</title>
        <authorList>
            <person name="Huang X."/>
            <person name="Cheng Q."/>
            <person name="Du Z."/>
        </authorList>
    </citation>
    <scope>RIBOSOMAL FRAMESHIFT</scope>
</reference>
<reference key="8">
    <citation type="journal article" date="2017" name="Curr. Opin. Struct. Biol.">
        <title>Retroviral intasomes arising.</title>
        <authorList>
            <person name="Engelman A.N."/>
            <person name="Cherepanov P."/>
        </authorList>
    </citation>
    <scope>REVIEW (INTEGRASE)</scope>
</reference>
<feature type="initiator methionine" description="Removed; by host" evidence="23">
    <location>
        <position position="1"/>
    </location>
</feature>
<feature type="chain" id="PRO_0000125494" description="Gag-Pro-Pol polyprotein">
    <location>
        <begin position="2"/>
        <end position="1771"/>
    </location>
</feature>
<feature type="chain" id="PRO_0000443138" description="Matrix protein p10">
    <location>
        <begin position="2"/>
        <end position="100"/>
    </location>
</feature>
<feature type="chain" id="PRO_0000443139" description="Phosphorylated protein pp24">
    <location>
        <begin position="101"/>
        <end position="216"/>
    </location>
</feature>
<feature type="propeptide" id="PRO_0000443140" evidence="23">
    <location>
        <begin position="101"/>
        <end position="161"/>
    </location>
</feature>
<feature type="chain" id="PRO_0000443141" description="Phosphorylated protein pp18">
    <location>
        <begin position="162"/>
        <end position="216"/>
    </location>
</feature>
<feature type="chain" id="PRO_0000443142" description="p12">
    <location>
        <begin position="217"/>
        <end position="299"/>
    </location>
</feature>
<feature type="chain" id="PRO_0000443143" description="Capsid protein p27">
    <location>
        <begin position="300"/>
        <end position="525"/>
    </location>
</feature>
<feature type="chain" id="PRO_0000443144" description="Nucleocapsid protein-dUTPase">
    <location>
        <begin position="526"/>
        <end position="759"/>
    </location>
</feature>
<feature type="chain" id="PRO_0000443145" description="Protease 17 kDa">
    <location>
        <begin position="760"/>
        <end position="911"/>
    </location>
</feature>
<feature type="chain" id="PRO_0000443146" description="Protease 13 kDa">
    <location>
        <begin position="760"/>
        <end position="873"/>
    </location>
</feature>
<feature type="peptide" id="PRO_0000443147" description="G-patch peptide">
    <location>
        <begin position="874"/>
        <end position="911"/>
    </location>
</feature>
<feature type="chain" id="PRO_0000434773" description="Reverse transcriptase/ribonuclease H">
    <location>
        <begin position="912"/>
        <end position="1496"/>
    </location>
</feature>
<feature type="chain" id="PRO_0000434774" description="Integrase">
    <location>
        <begin position="1497"/>
        <end position="1771"/>
    </location>
</feature>
<feature type="domain" description="Peptidase A2" evidence="10">
    <location>
        <begin position="780"/>
        <end position="856"/>
    </location>
</feature>
<feature type="domain" description="G-patch" evidence="9 19">
    <location>
        <begin position="867"/>
        <end position="913"/>
    </location>
</feature>
<feature type="domain" description="Reverse transcriptase" evidence="11">
    <location>
        <begin position="959"/>
        <end position="1147"/>
    </location>
</feature>
<feature type="domain" description="RNase H type-1" evidence="12">
    <location>
        <begin position="1361"/>
        <end position="1492"/>
    </location>
</feature>
<feature type="domain" description="Integrase catalytic" evidence="14">
    <location>
        <begin position="1550"/>
        <end position="1719"/>
    </location>
</feature>
<feature type="zinc finger region" description="CCHC-type 1" evidence="8">
    <location>
        <begin position="547"/>
        <end position="564"/>
    </location>
</feature>
<feature type="zinc finger region" description="CCHC-type 2" evidence="8">
    <location>
        <begin position="576"/>
        <end position="593"/>
    </location>
</feature>
<feature type="zinc finger region" description="Integrase-type" evidence="13">
    <location>
        <begin position="1496"/>
        <end position="1537"/>
    </location>
</feature>
<feature type="DNA-binding region" description="Integrase-type" evidence="15">
    <location>
        <begin position="1716"/>
        <end position="1765"/>
    </location>
</feature>
<feature type="region of interest" description="Disordered" evidence="16">
    <location>
        <begin position="113"/>
        <end position="178"/>
    </location>
</feature>
<feature type="region of interest" description="Disordered" evidence="16">
    <location>
        <begin position="260"/>
        <end position="279"/>
    </location>
</feature>
<feature type="region of interest" description="Disordered" evidence="16">
    <location>
        <begin position="592"/>
        <end position="626"/>
    </location>
</feature>
<feature type="coiled-coil region" evidence="7">
    <location>
        <begin position="216"/>
        <end position="257"/>
    </location>
</feature>
<feature type="short sequence motif" description="PPXY motif" evidence="17">
    <location>
        <begin position="202"/>
        <end position="205"/>
    </location>
</feature>
<feature type="short sequence motif" description="PTAP/PSAP motif" evidence="17">
    <location>
        <begin position="210"/>
        <end position="213"/>
    </location>
</feature>
<feature type="short sequence motif" description="PTAP/PSAP motif" evidence="2">
    <location>
        <begin position="335"/>
        <end position="338"/>
    </location>
</feature>
<feature type="compositionally biased region" description="Polar residues" evidence="16">
    <location>
        <begin position="113"/>
        <end position="125"/>
    </location>
</feature>
<feature type="compositionally biased region" description="Polar residues" evidence="16">
    <location>
        <begin position="140"/>
        <end position="152"/>
    </location>
</feature>
<feature type="active site" description="Protease; shared with dimeric partner" evidence="10">
    <location>
        <position position="785"/>
    </location>
</feature>
<feature type="binding site" evidence="11">
    <location>
        <position position="1024"/>
    </location>
    <ligand>
        <name>Mg(2+)</name>
        <dbReference type="ChEBI" id="CHEBI:18420"/>
        <label>1</label>
        <note>catalytic; for reverse transcriptase activity</note>
    </ligand>
</feature>
<feature type="binding site" evidence="11">
    <location>
        <position position="1099"/>
    </location>
    <ligand>
        <name>Mg(2+)</name>
        <dbReference type="ChEBI" id="CHEBI:18420"/>
        <label>1</label>
        <note>catalytic; for reverse transcriptase activity</note>
    </ligand>
</feature>
<feature type="binding site" evidence="11">
    <location>
        <position position="1100"/>
    </location>
    <ligand>
        <name>Mg(2+)</name>
        <dbReference type="ChEBI" id="CHEBI:18420"/>
        <label>1</label>
        <note>catalytic; for reverse transcriptase activity</note>
    </ligand>
</feature>
<feature type="binding site" evidence="12">
    <location>
        <position position="1370"/>
    </location>
    <ligand>
        <name>Mg(2+)</name>
        <dbReference type="ChEBI" id="CHEBI:18420"/>
        <label>2</label>
        <note>catalytic; for RNase H activity</note>
    </ligand>
</feature>
<feature type="binding site" evidence="12">
    <location>
        <position position="1399"/>
    </location>
    <ligand>
        <name>Mg(2+)</name>
        <dbReference type="ChEBI" id="CHEBI:18420"/>
        <label>2</label>
        <note>catalytic; for RNase H activity</note>
    </ligand>
</feature>
<feature type="binding site" evidence="12">
    <location>
        <position position="1420"/>
    </location>
    <ligand>
        <name>Mg(2+)</name>
        <dbReference type="ChEBI" id="CHEBI:18420"/>
        <label>2</label>
        <note>catalytic; for RNase H activity</note>
    </ligand>
</feature>
<feature type="binding site" evidence="12">
    <location>
        <position position="1484"/>
    </location>
    <ligand>
        <name>Mg(2+)</name>
        <dbReference type="ChEBI" id="CHEBI:18420"/>
        <label>2</label>
        <note>catalytic; for RNase H activity</note>
    </ligand>
</feature>
<feature type="binding site" evidence="13">
    <location>
        <position position="1505"/>
    </location>
    <ligand>
        <name>Zn(2+)</name>
        <dbReference type="ChEBI" id="CHEBI:29105"/>
    </ligand>
</feature>
<feature type="binding site" evidence="13">
    <location>
        <position position="1509"/>
    </location>
    <ligand>
        <name>Zn(2+)</name>
        <dbReference type="ChEBI" id="CHEBI:29105"/>
    </ligand>
</feature>
<feature type="binding site" evidence="13">
    <location>
        <position position="1533"/>
    </location>
    <ligand>
        <name>Zn(2+)</name>
        <dbReference type="ChEBI" id="CHEBI:29105"/>
    </ligand>
</feature>
<feature type="binding site" evidence="13">
    <location>
        <position position="1536"/>
    </location>
    <ligand>
        <name>Zn(2+)</name>
        <dbReference type="ChEBI" id="CHEBI:29105"/>
    </ligand>
</feature>
<feature type="binding site" evidence="14">
    <location>
        <position position="1561"/>
    </location>
    <ligand>
        <name>Mg(2+)</name>
        <dbReference type="ChEBI" id="CHEBI:18420"/>
        <label>3</label>
        <note>catalytic; for integrase activity</note>
    </ligand>
</feature>
<feature type="binding site" evidence="14">
    <location>
        <position position="1618"/>
    </location>
    <ligand>
        <name>Mg(2+)</name>
        <dbReference type="ChEBI" id="CHEBI:18420"/>
        <label>3</label>
        <note>catalytic; for integrase activity</note>
    </ligand>
</feature>
<feature type="binding site" evidence="1">
    <location>
        <position position="1654"/>
    </location>
    <ligand>
        <name>Mg(2+)</name>
        <dbReference type="ChEBI" id="CHEBI:18420"/>
        <label>3</label>
        <note>catalytic; for integrase activity</note>
    </ligand>
</feature>
<feature type="site" description="Cleavage; by viral protease" evidence="3">
    <location>
        <begin position="100"/>
        <end position="101"/>
    </location>
</feature>
<feature type="site" description="Cleavage; by viral protease" evidence="3">
    <location>
        <begin position="161"/>
        <end position="162"/>
    </location>
</feature>
<feature type="site" description="Cleavage; by viral protease" evidence="3">
    <location>
        <begin position="216"/>
        <end position="217"/>
    </location>
</feature>
<feature type="site" description="Cleavage; by viral protease" evidence="3">
    <location>
        <begin position="299"/>
        <end position="300"/>
    </location>
</feature>
<feature type="site" description="Cleavage; by viral protease" evidence="3">
    <location>
        <begin position="525"/>
        <end position="526"/>
    </location>
</feature>
<feature type="site" description="Cleavage; by viral protease" evidence="20">
    <location>
        <begin position="759"/>
        <end position="760"/>
    </location>
</feature>
<feature type="site" description="Cleavage; by viral protease" evidence="18">
    <location>
        <begin position="873"/>
        <end position="874"/>
    </location>
</feature>
<feature type="site" description="Cleavage; by viral protease" evidence="20">
    <location>
        <begin position="911"/>
        <end position="912"/>
    </location>
</feature>
<feature type="site" description="Cleavage; by viral protease" evidence="2">
    <location>
        <begin position="1496"/>
        <end position="1497"/>
    </location>
</feature>
<feature type="lipid moiety-binding region" description="N-myristoyl glycine; by host" evidence="6">
    <location>
        <position position="2"/>
    </location>
</feature>
<feature type="mutagenesis site" description="80% loss of virus release." evidence="17">
    <original>PPY</original>
    <variation>GAA</variation>
    <location>
        <begin position="203"/>
        <end position="205"/>
    </location>
</feature>
<feature type="mutagenesis site" description="30% loss of virus release." evidence="17">
    <original>PS</original>
    <variation>AG</variation>
    <location>
        <begin position="210"/>
        <end position="211"/>
    </location>
</feature>
<feature type="mutagenesis site" description="Accelerated processing of the protease C-terminus." evidence="18">
    <original>N</original>
    <variation>I</variation>
    <location>
        <position position="868"/>
    </location>
</feature>
<feature type="mutagenesis site" description="30% loss of infectivity." evidence="18">
    <original>A</original>
    <variation>R</variation>
    <location>
        <position position="873"/>
    </location>
</feature>
<feature type="mutagenesis site" description="Accelerated processing of the protease C-terminus. 50% loss of RT activity." evidence="18">
    <original>Q</original>
    <variation>I</variation>
    <location>
        <position position="874"/>
    </location>
</feature>
<feature type="mutagenesis site" description="85% loss of infectivity and 65% loss of RT activity." evidence="19">
    <original>G</original>
    <variation>A</variation>
    <location>
        <position position="879"/>
    </location>
</feature>
<feature type="mutagenesis site" description="90% loss of infectivity and 65% loss of RT activity." evidence="19">
    <original>Y</original>
    <variation>A</variation>
    <location>
        <position position="880"/>
    </location>
</feature>
<feature type="mutagenesis site" description="Defective in nucleic acid binding. 80% loss of infectivity. 50% loss of RT activity." evidence="18">
    <original>Y</original>
    <variation>S</variation>
    <location>
        <position position="880"/>
    </location>
</feature>
<feature type="mutagenesis site" description="90% loss of infectivity and 55% loss of RT activity." evidence="19">
    <original>G</original>
    <variation>A</variation>
    <location>
        <position position="883"/>
    </location>
</feature>
<feature type="mutagenesis site" description="70% loss of infectivity and 60% loss of RT activity." evidence="19">
    <original>G</original>
    <variation>A</variation>
    <location>
        <position position="885"/>
    </location>
</feature>
<feature type="mutagenesis site" description="85% loss of infectivity and 60% loss of RT activity." evidence="19">
    <original>L</original>
    <variation>A</variation>
    <location>
        <position position="886"/>
    </location>
</feature>
<feature type="mutagenesis site" description="95% loss of infectivity and 95% loss of RT activity." evidence="19">
    <original>G</original>
    <variation>A</variation>
    <location>
        <position position="887"/>
    </location>
</feature>
<feature type="mutagenesis site" description="85% loss of infectivity and 60% loss of RT activity." evidence="19">
    <original>G</original>
    <variation>A</variation>
    <location>
        <position position="892"/>
    </location>
</feature>
<feature type="mutagenesis site" description="60% loss of infectivity and 35% loss of RT activity." evidence="19">
    <original>G</original>
    <variation>A</variation>
    <location>
        <position position="907"/>
    </location>
</feature>
<feature type="strand" evidence="28">
    <location>
        <begin position="761"/>
        <end position="763"/>
    </location>
</feature>
<feature type="strand" evidence="28">
    <location>
        <begin position="770"/>
        <end position="775"/>
    </location>
</feature>
<feature type="strand" evidence="28">
    <location>
        <begin position="778"/>
        <end position="784"/>
    </location>
</feature>
<feature type="strand" evidence="28">
    <location>
        <begin position="788"/>
        <end position="790"/>
    </location>
</feature>
<feature type="strand" evidence="28">
    <location>
        <begin position="792"/>
        <end position="794"/>
    </location>
</feature>
<feature type="helix" evidence="28">
    <location>
        <begin position="795"/>
        <end position="797"/>
    </location>
</feature>
<feature type="strand" evidence="30">
    <location>
        <begin position="804"/>
        <end position="806"/>
    </location>
</feature>
<feature type="helix" evidence="29">
    <location>
        <begin position="812"/>
        <end position="814"/>
    </location>
</feature>
<feature type="strand" evidence="28">
    <location>
        <begin position="821"/>
        <end position="825"/>
    </location>
</feature>
<feature type="strand" evidence="28">
    <location>
        <begin position="827"/>
        <end position="830"/>
    </location>
</feature>
<feature type="strand" evidence="28">
    <location>
        <begin position="836"/>
        <end position="839"/>
    </location>
</feature>
<feature type="strand" evidence="28">
    <location>
        <begin position="842"/>
        <end position="846"/>
    </location>
</feature>
<feature type="strand" evidence="27">
    <location>
        <begin position="848"/>
        <end position="852"/>
    </location>
</feature>
<feature type="helix" evidence="28">
    <location>
        <begin position="854"/>
        <end position="859"/>
    </location>
</feature>
<feature type="strand" evidence="28">
    <location>
        <begin position="863"/>
        <end position="865"/>
    </location>
</feature>
<dbReference type="EC" id="3.6.1.23" evidence="4"/>
<dbReference type="EC" id="3.4.23.-" evidence="10 20"/>
<dbReference type="EC" id="2.7.7.49" evidence="11"/>
<dbReference type="EC" id="2.7.7.7" evidence="11"/>
<dbReference type="EC" id="3.1.26.4" evidence="12"/>
<dbReference type="EC" id="2.7.7.-" evidence="6"/>
<dbReference type="EC" id="3.1.-.-" evidence="6"/>
<dbReference type="EMBL" id="M12349">
    <property type="protein sequence ID" value="AAA47711.1"/>
    <property type="status" value="ALT_SEQ"/>
    <property type="molecule type" value="Genomic_RNA"/>
</dbReference>
<dbReference type="EMBL" id="AF033815">
    <property type="protein sequence ID" value="AAC82576.1"/>
    <property type="molecule type" value="Genomic_RNA"/>
</dbReference>
<dbReference type="PIR" id="C25839">
    <property type="entry name" value="GNLJMP"/>
</dbReference>
<dbReference type="RefSeq" id="NP_056891.1">
    <molecule id="P07572-1"/>
    <property type="nucleotide sequence ID" value="NC_001550.1"/>
</dbReference>
<dbReference type="PDB" id="6HWI">
    <property type="method" value="EM"/>
    <property type="resolution" value="7.20 A"/>
    <property type="chains" value="A/B/C=317-516"/>
</dbReference>
<dbReference type="PDB" id="6S1U">
    <property type="method" value="X-ray"/>
    <property type="resolution" value="1.90 A"/>
    <property type="chains" value="A/B=760-873"/>
</dbReference>
<dbReference type="PDB" id="6S1V">
    <property type="method" value="X-ray"/>
    <property type="resolution" value="1.64 A"/>
    <property type="chains" value="A/B=760-873"/>
</dbReference>
<dbReference type="PDB" id="6S1W">
    <property type="method" value="X-ray"/>
    <property type="resolution" value="1.98 A"/>
    <property type="chains" value="A/B=760-873"/>
</dbReference>
<dbReference type="PDB" id="7BGT">
    <property type="method" value="X-ray"/>
    <property type="resolution" value="1.93 A"/>
    <property type="chains" value="A/B/C/D=760-873"/>
</dbReference>
<dbReference type="PDB" id="7BGU">
    <property type="method" value="X-ray"/>
    <property type="resolution" value="2.43 A"/>
    <property type="chains" value="A/B/C/D=760-873"/>
</dbReference>
<dbReference type="PDBsum" id="6HWI"/>
<dbReference type="PDBsum" id="6S1U"/>
<dbReference type="PDBsum" id="6S1V"/>
<dbReference type="PDBsum" id="6S1W"/>
<dbReference type="PDBsum" id="7BGT"/>
<dbReference type="PDBsum" id="7BGU"/>
<dbReference type="EMDB" id="EMD-0290"/>
<dbReference type="SMR" id="P07572"/>
<dbReference type="MEROPS" id="A02.009"/>
<dbReference type="GeneID" id="2746973"/>
<dbReference type="KEGG" id="vg:2746973"/>
<dbReference type="OrthoDB" id="2921at10239"/>
<dbReference type="Proteomes" id="UP000008870">
    <property type="component" value="Genome"/>
</dbReference>
<dbReference type="Proteomes" id="UP000105838">
    <property type="component" value="Genome"/>
</dbReference>
<dbReference type="GO" id="GO:0019013">
    <property type="term" value="C:viral nucleocapsid"/>
    <property type="evidence" value="ECO:0007669"/>
    <property type="project" value="UniProtKB-KW"/>
</dbReference>
<dbReference type="GO" id="GO:0004190">
    <property type="term" value="F:aspartic-type endopeptidase activity"/>
    <property type="evidence" value="ECO:0007669"/>
    <property type="project" value="UniProtKB-KW"/>
</dbReference>
<dbReference type="GO" id="GO:0003677">
    <property type="term" value="F:DNA binding"/>
    <property type="evidence" value="ECO:0007669"/>
    <property type="project" value="UniProtKB-KW"/>
</dbReference>
<dbReference type="GO" id="GO:0003887">
    <property type="term" value="F:DNA-directed DNA polymerase activity"/>
    <property type="evidence" value="ECO:0007669"/>
    <property type="project" value="UniProtKB-KW"/>
</dbReference>
<dbReference type="GO" id="GO:0004170">
    <property type="term" value="F:dUTP diphosphatase activity"/>
    <property type="evidence" value="ECO:0007669"/>
    <property type="project" value="UniProtKB-EC"/>
</dbReference>
<dbReference type="GO" id="GO:0035613">
    <property type="term" value="F:RNA stem-loop binding"/>
    <property type="evidence" value="ECO:0007669"/>
    <property type="project" value="TreeGrafter"/>
</dbReference>
<dbReference type="GO" id="GO:0003964">
    <property type="term" value="F:RNA-directed DNA polymerase activity"/>
    <property type="evidence" value="ECO:0007669"/>
    <property type="project" value="UniProtKB-KW"/>
</dbReference>
<dbReference type="GO" id="GO:0004523">
    <property type="term" value="F:RNA-DNA hybrid ribonuclease activity"/>
    <property type="evidence" value="ECO:0007669"/>
    <property type="project" value="UniProtKB-EC"/>
</dbReference>
<dbReference type="GO" id="GO:0039660">
    <property type="term" value="F:structural constituent of virion"/>
    <property type="evidence" value="ECO:0007669"/>
    <property type="project" value="UniProtKB-KW"/>
</dbReference>
<dbReference type="GO" id="GO:0008270">
    <property type="term" value="F:zinc ion binding"/>
    <property type="evidence" value="ECO:0007669"/>
    <property type="project" value="UniProtKB-KW"/>
</dbReference>
<dbReference type="GO" id="GO:0015074">
    <property type="term" value="P:DNA integration"/>
    <property type="evidence" value="ECO:0007669"/>
    <property type="project" value="UniProtKB-KW"/>
</dbReference>
<dbReference type="GO" id="GO:0006310">
    <property type="term" value="P:DNA recombination"/>
    <property type="evidence" value="ECO:0007669"/>
    <property type="project" value="UniProtKB-KW"/>
</dbReference>
<dbReference type="GO" id="GO:0075713">
    <property type="term" value="P:establishment of integrated proviral latency"/>
    <property type="evidence" value="ECO:0007669"/>
    <property type="project" value="UniProtKB-KW"/>
</dbReference>
<dbReference type="GO" id="GO:0006508">
    <property type="term" value="P:proteolysis"/>
    <property type="evidence" value="ECO:0007669"/>
    <property type="project" value="UniProtKB-KW"/>
</dbReference>
<dbReference type="GO" id="GO:0046718">
    <property type="term" value="P:symbiont entry into host cell"/>
    <property type="evidence" value="ECO:0007669"/>
    <property type="project" value="UniProtKB-KW"/>
</dbReference>
<dbReference type="GO" id="GO:0044826">
    <property type="term" value="P:viral genome integration into host DNA"/>
    <property type="evidence" value="ECO:0007669"/>
    <property type="project" value="UniProtKB-KW"/>
</dbReference>
<dbReference type="GO" id="GO:0075523">
    <property type="term" value="P:viral translational frameshifting"/>
    <property type="evidence" value="ECO:0007669"/>
    <property type="project" value="UniProtKB-KW"/>
</dbReference>
<dbReference type="CDD" id="cd05482">
    <property type="entry name" value="HIV_retropepsin_like"/>
    <property type="match status" value="1"/>
</dbReference>
<dbReference type="CDD" id="cd09273">
    <property type="entry name" value="RNase_HI_RT_Bel"/>
    <property type="match status" value="1"/>
</dbReference>
<dbReference type="CDD" id="cd01645">
    <property type="entry name" value="RT_Rtv"/>
    <property type="match status" value="1"/>
</dbReference>
<dbReference type="CDD" id="cd07557">
    <property type="entry name" value="trimeric_dUTPase"/>
    <property type="match status" value="1"/>
</dbReference>
<dbReference type="FunFam" id="1.10.150.490:FF:000002">
    <property type="entry name" value="Gag polyprotein"/>
    <property type="match status" value="1"/>
</dbReference>
<dbReference type="FunFam" id="4.10.60.10:FF:000036">
    <property type="entry name" value="Gag polyprotein"/>
    <property type="match status" value="1"/>
</dbReference>
<dbReference type="Gene3D" id="1.10.10.200">
    <property type="match status" value="1"/>
</dbReference>
<dbReference type="Gene3D" id="1.10.1200.30">
    <property type="match status" value="1"/>
</dbReference>
<dbReference type="Gene3D" id="2.70.40.10">
    <property type="match status" value="1"/>
</dbReference>
<dbReference type="Gene3D" id="3.30.70.270">
    <property type="match status" value="2"/>
</dbReference>
<dbReference type="Gene3D" id="2.40.70.10">
    <property type="entry name" value="Acid Proteases"/>
    <property type="match status" value="1"/>
</dbReference>
<dbReference type="Gene3D" id="3.10.10.10">
    <property type="entry name" value="HIV Type 1 Reverse Transcriptase, subunit A, domain 1"/>
    <property type="match status" value="1"/>
</dbReference>
<dbReference type="Gene3D" id="1.10.375.10">
    <property type="entry name" value="Human Immunodeficiency Virus Type 1 Capsid Protein"/>
    <property type="match status" value="1"/>
</dbReference>
<dbReference type="Gene3D" id="2.30.30.10">
    <property type="entry name" value="Integrase, C-terminal domain superfamily, retroviral"/>
    <property type="match status" value="1"/>
</dbReference>
<dbReference type="Gene3D" id="1.10.150.490">
    <property type="entry name" value="Retroviral GAG p10 protein"/>
    <property type="match status" value="1"/>
</dbReference>
<dbReference type="Gene3D" id="3.30.420.10">
    <property type="entry name" value="Ribonuclease H-like superfamily/Ribonuclease H"/>
    <property type="match status" value="2"/>
</dbReference>
<dbReference type="Gene3D" id="4.10.60.10">
    <property type="entry name" value="Zinc finger, CCHC-type"/>
    <property type="match status" value="1"/>
</dbReference>
<dbReference type="InterPro" id="IPR001969">
    <property type="entry name" value="Aspartic_peptidase_AS"/>
</dbReference>
<dbReference type="InterPro" id="IPR003322">
    <property type="entry name" value="B_retro_matrix"/>
</dbReference>
<dbReference type="InterPro" id="IPR038124">
    <property type="entry name" value="B_retro_matrix_sf"/>
</dbReference>
<dbReference type="InterPro" id="IPR043502">
    <property type="entry name" value="DNA/RNA_pol_sf"/>
</dbReference>
<dbReference type="InterPro" id="IPR029054">
    <property type="entry name" value="dUTPase-like"/>
</dbReference>
<dbReference type="InterPro" id="IPR036157">
    <property type="entry name" value="dUTPase-like_sf"/>
</dbReference>
<dbReference type="InterPro" id="IPR033704">
    <property type="entry name" value="dUTPase_trimeric"/>
</dbReference>
<dbReference type="InterPro" id="IPR000467">
    <property type="entry name" value="G_patch_dom"/>
</dbReference>
<dbReference type="InterPro" id="IPR045345">
    <property type="entry name" value="Gag_p24_C"/>
</dbReference>
<dbReference type="InterPro" id="IPR017856">
    <property type="entry name" value="Integrase-like_N"/>
</dbReference>
<dbReference type="InterPro" id="IPR036862">
    <property type="entry name" value="Integrase_C_dom_sf_retrovir"/>
</dbReference>
<dbReference type="InterPro" id="IPR001037">
    <property type="entry name" value="Integrase_C_retrovir"/>
</dbReference>
<dbReference type="InterPro" id="IPR001584">
    <property type="entry name" value="Integrase_cat-core"/>
</dbReference>
<dbReference type="InterPro" id="IPR003308">
    <property type="entry name" value="Integrase_Zn-bd_dom_N"/>
</dbReference>
<dbReference type="InterPro" id="IPR001995">
    <property type="entry name" value="Peptidase_A2_cat"/>
</dbReference>
<dbReference type="InterPro" id="IPR021109">
    <property type="entry name" value="Peptidase_aspartic_dom_sf"/>
</dbReference>
<dbReference type="InterPro" id="IPR034170">
    <property type="entry name" value="Retropepsin-like_cat_dom"/>
</dbReference>
<dbReference type="InterPro" id="IPR018061">
    <property type="entry name" value="Retropepsins"/>
</dbReference>
<dbReference type="InterPro" id="IPR008916">
    <property type="entry name" value="Retrov_capsid_C"/>
</dbReference>
<dbReference type="InterPro" id="IPR008919">
    <property type="entry name" value="Retrov_capsid_N"/>
</dbReference>
<dbReference type="InterPro" id="IPR010999">
    <property type="entry name" value="Retrovr_matrix"/>
</dbReference>
<dbReference type="InterPro" id="IPR043128">
    <property type="entry name" value="Rev_trsase/Diguanyl_cyclase"/>
</dbReference>
<dbReference type="InterPro" id="IPR012337">
    <property type="entry name" value="RNaseH-like_sf"/>
</dbReference>
<dbReference type="InterPro" id="IPR002156">
    <property type="entry name" value="RNaseH_domain"/>
</dbReference>
<dbReference type="InterPro" id="IPR036397">
    <property type="entry name" value="RNaseH_sf"/>
</dbReference>
<dbReference type="InterPro" id="IPR000477">
    <property type="entry name" value="RT_dom"/>
</dbReference>
<dbReference type="InterPro" id="IPR010661">
    <property type="entry name" value="RVT_thumb"/>
</dbReference>
<dbReference type="InterPro" id="IPR001878">
    <property type="entry name" value="Znf_CCHC"/>
</dbReference>
<dbReference type="InterPro" id="IPR036875">
    <property type="entry name" value="Znf_CCHC_sf"/>
</dbReference>
<dbReference type="PANTHER" id="PTHR41694">
    <property type="entry name" value="ENDOGENOUS RETROVIRUS GROUP K MEMBER POL PROTEIN"/>
    <property type="match status" value="1"/>
</dbReference>
<dbReference type="PANTHER" id="PTHR41694:SF3">
    <property type="entry name" value="RNA-DIRECTED DNA POLYMERASE-RELATED"/>
    <property type="match status" value="1"/>
</dbReference>
<dbReference type="Pfam" id="PF00692">
    <property type="entry name" value="dUTPase"/>
    <property type="match status" value="1"/>
</dbReference>
<dbReference type="Pfam" id="PF01585">
    <property type="entry name" value="G-patch"/>
    <property type="match status" value="1"/>
</dbReference>
<dbReference type="Pfam" id="PF02337">
    <property type="entry name" value="Gag_p10"/>
    <property type="match status" value="1"/>
</dbReference>
<dbReference type="Pfam" id="PF00607">
    <property type="entry name" value="Gag_p24"/>
    <property type="match status" value="1"/>
</dbReference>
<dbReference type="Pfam" id="PF19317">
    <property type="entry name" value="Gag_p24_C"/>
    <property type="match status" value="1"/>
</dbReference>
<dbReference type="Pfam" id="PF00552">
    <property type="entry name" value="IN_DBD_C"/>
    <property type="match status" value="1"/>
</dbReference>
<dbReference type="Pfam" id="PF02022">
    <property type="entry name" value="Integrase_Zn"/>
    <property type="match status" value="1"/>
</dbReference>
<dbReference type="Pfam" id="PF00075">
    <property type="entry name" value="RNase_H"/>
    <property type="match status" value="1"/>
</dbReference>
<dbReference type="Pfam" id="PF00665">
    <property type="entry name" value="rve"/>
    <property type="match status" value="1"/>
</dbReference>
<dbReference type="Pfam" id="PF00077">
    <property type="entry name" value="RVP"/>
    <property type="match status" value="1"/>
</dbReference>
<dbReference type="Pfam" id="PF00078">
    <property type="entry name" value="RVT_1"/>
    <property type="match status" value="1"/>
</dbReference>
<dbReference type="Pfam" id="PF06817">
    <property type="entry name" value="RVT_thumb"/>
    <property type="match status" value="1"/>
</dbReference>
<dbReference type="Pfam" id="PF14787">
    <property type="entry name" value="zf-CCHC_5"/>
    <property type="match status" value="1"/>
</dbReference>
<dbReference type="SMART" id="SM00443">
    <property type="entry name" value="G_patch"/>
    <property type="match status" value="1"/>
</dbReference>
<dbReference type="SMART" id="SM00343">
    <property type="entry name" value="ZnF_C2HC"/>
    <property type="match status" value="2"/>
</dbReference>
<dbReference type="SUPFAM" id="SSF50630">
    <property type="entry name" value="Acid proteases"/>
    <property type="match status" value="1"/>
</dbReference>
<dbReference type="SUPFAM" id="SSF50122">
    <property type="entry name" value="DNA-binding domain of retroviral integrase"/>
    <property type="match status" value="1"/>
</dbReference>
<dbReference type="SUPFAM" id="SSF56672">
    <property type="entry name" value="DNA/RNA polymerases"/>
    <property type="match status" value="1"/>
</dbReference>
<dbReference type="SUPFAM" id="SSF51283">
    <property type="entry name" value="dUTPase-like"/>
    <property type="match status" value="1"/>
</dbReference>
<dbReference type="SUPFAM" id="SSF46919">
    <property type="entry name" value="N-terminal Zn binding domain of HIV integrase"/>
    <property type="match status" value="1"/>
</dbReference>
<dbReference type="SUPFAM" id="SSF47836">
    <property type="entry name" value="Retroviral matrix proteins"/>
    <property type="match status" value="1"/>
</dbReference>
<dbReference type="SUPFAM" id="SSF47353">
    <property type="entry name" value="Retrovirus capsid dimerization domain-like"/>
    <property type="match status" value="1"/>
</dbReference>
<dbReference type="SUPFAM" id="SSF47943">
    <property type="entry name" value="Retrovirus capsid protein, N-terminal core domain"/>
    <property type="match status" value="1"/>
</dbReference>
<dbReference type="SUPFAM" id="SSF57756">
    <property type="entry name" value="Retrovirus zinc finger-like domains"/>
    <property type="match status" value="1"/>
</dbReference>
<dbReference type="SUPFAM" id="SSF53098">
    <property type="entry name" value="Ribonuclease H-like"/>
    <property type="match status" value="1"/>
</dbReference>
<dbReference type="PROSITE" id="PS50175">
    <property type="entry name" value="ASP_PROT_RETROV"/>
    <property type="match status" value="1"/>
</dbReference>
<dbReference type="PROSITE" id="PS00141">
    <property type="entry name" value="ASP_PROTEASE"/>
    <property type="match status" value="1"/>
</dbReference>
<dbReference type="PROSITE" id="PS50174">
    <property type="entry name" value="G_PATCH"/>
    <property type="match status" value="1"/>
</dbReference>
<dbReference type="PROSITE" id="PS50994">
    <property type="entry name" value="INTEGRASE"/>
    <property type="match status" value="1"/>
</dbReference>
<dbReference type="PROSITE" id="PS51027">
    <property type="entry name" value="INTEGRASE_DBD"/>
    <property type="match status" value="1"/>
</dbReference>
<dbReference type="PROSITE" id="PS50879">
    <property type="entry name" value="RNASE_H_1"/>
    <property type="match status" value="1"/>
</dbReference>
<dbReference type="PROSITE" id="PS50878">
    <property type="entry name" value="RT_POL"/>
    <property type="match status" value="1"/>
</dbReference>
<dbReference type="PROSITE" id="PS50158">
    <property type="entry name" value="ZF_CCHC"/>
    <property type="match status" value="1"/>
</dbReference>
<dbReference type="PROSITE" id="PS50876">
    <property type="entry name" value="ZF_INTEGRASE"/>
    <property type="match status" value="1"/>
</dbReference>
<keyword id="KW-0002">3D-structure</keyword>
<keyword id="KW-0064">Aspartyl protease</keyword>
<keyword id="KW-0175">Coiled coil</keyword>
<keyword id="KW-0229">DNA integration</keyword>
<keyword id="KW-0233">DNA recombination</keyword>
<keyword id="KW-0238">DNA-binding</keyword>
<keyword id="KW-0239">DNA-directed DNA polymerase</keyword>
<keyword id="KW-0255">Endonuclease</keyword>
<keyword id="KW-0378">Hydrolase</keyword>
<keyword id="KW-0449">Lipoprotein</keyword>
<keyword id="KW-0460">Magnesium</keyword>
<keyword id="KW-0479">Metal-binding</keyword>
<keyword id="KW-0511">Multifunctional enzyme</keyword>
<keyword id="KW-0519">Myristate</keyword>
<keyword id="KW-0540">Nuclease</keyword>
<keyword id="KW-0548">Nucleotidyltransferase</keyword>
<keyword id="KW-0645">Protease</keyword>
<keyword id="KW-0677">Repeat</keyword>
<keyword id="KW-0688">Ribosomal frameshifting</keyword>
<keyword id="KW-0694">RNA-binding</keyword>
<keyword id="KW-0695">RNA-directed DNA polymerase</keyword>
<keyword id="KW-0808">Transferase</keyword>
<keyword id="KW-1179">Viral genome integration</keyword>
<keyword id="KW-0468">Viral matrix protein</keyword>
<keyword id="KW-0543">Viral nucleoprotein</keyword>
<keyword id="KW-0946">Virion</keyword>
<keyword id="KW-1160">Virus entry into host cell</keyword>
<keyword id="KW-0862">Zinc</keyword>
<keyword id="KW-0863">Zinc-finger</keyword>
<organism>
    <name type="scientific">Mason-Pfizer monkey virus</name>
    <name type="common">MPMV</name>
    <name type="synonym">Simian Mason-Pfizer virus</name>
    <dbReference type="NCBI Taxonomy" id="11855"/>
    <lineage>
        <taxon>Viruses</taxon>
        <taxon>Riboviria</taxon>
        <taxon>Pararnavirae</taxon>
        <taxon>Artverviricota</taxon>
        <taxon>Revtraviricetes</taxon>
        <taxon>Ortervirales</taxon>
        <taxon>Retroviridae</taxon>
        <taxon>Orthoretrovirinae</taxon>
        <taxon>Betaretrovirus</taxon>
    </lineage>
</organism>
<name>POL_MPMV</name>
<proteinExistence type="evidence at protein level"/>
<protein>
    <recommendedName>
        <fullName>Gag-Pro-Pol polyprotein</fullName>
    </recommendedName>
    <alternativeName>
        <fullName>Pr180</fullName>
    </alternativeName>
    <component>
        <recommendedName>
            <fullName>Matrix protein p10</fullName>
        </recommendedName>
    </component>
    <component>
        <recommendedName>
            <fullName>Phosphorylated protein pp24</fullName>
        </recommendedName>
    </component>
    <component>
        <recommendedName>
            <fullName>Phosphorylated protein pp18</fullName>
        </recommendedName>
    </component>
    <component>
        <recommendedName>
            <fullName>p12</fullName>
        </recommendedName>
    </component>
    <component>
        <recommendedName>
            <fullName>Capsid protein p27</fullName>
        </recommendedName>
    </component>
    <component>
        <recommendedName>
            <fullName>Nucleocapsid protein-dUTPase</fullName>
            <shortName>NC-dUTPase</shortName>
            <ecNumber evidence="4">3.6.1.23</ecNumber>
        </recommendedName>
    </component>
    <component>
        <recommendedName>
            <fullName evidence="21">Protease 17 kDa</fullName>
            <ecNumber evidence="10 20">3.4.23.-</ecNumber>
        </recommendedName>
    </component>
    <component>
        <recommendedName>
            <fullName evidence="21">Protease 13 kDa</fullName>
            <ecNumber evidence="10 20">3.4.23.-</ecNumber>
        </recommendedName>
    </component>
    <component>
        <recommendedName>
            <fullName evidence="22">G-patch peptide</fullName>
        </recommendedName>
    </component>
    <component>
        <recommendedName>
            <fullName>Reverse transcriptase/ribonuclease H</fullName>
            <shortName>RT</shortName>
            <ecNumber evidence="11">2.7.7.49</ecNumber>
            <ecNumber evidence="11">2.7.7.7</ecNumber>
            <ecNumber evidence="12">3.1.26.4</ecNumber>
        </recommendedName>
    </component>
    <component>
        <recommendedName>
            <fullName>Integrase</fullName>
            <shortName>IN</shortName>
            <ecNumber evidence="6">2.7.7.-</ecNumber>
            <ecNumber evidence="6">3.1.-.-</ecNumber>
        </recommendedName>
    </component>
</protein>